<organism>
    <name type="scientific">Dictyostelium discoideum</name>
    <name type="common">Social amoeba</name>
    <dbReference type="NCBI Taxonomy" id="44689"/>
    <lineage>
        <taxon>Eukaryota</taxon>
        <taxon>Amoebozoa</taxon>
        <taxon>Evosea</taxon>
        <taxon>Eumycetozoa</taxon>
        <taxon>Dictyostelia</taxon>
        <taxon>Dictyosteliales</taxon>
        <taxon>Dictyosteliaceae</taxon>
        <taxon>Dictyostelium</taxon>
    </lineage>
</organism>
<dbReference type="EC" id="3.6.5.-" evidence="1"/>
<dbReference type="EMBL" id="AAFI02000200">
    <property type="protein sequence ID" value="EAL60809.1"/>
    <property type="molecule type" value="Genomic_DNA"/>
</dbReference>
<dbReference type="RefSeq" id="XP_629241.1">
    <property type="nucleotide sequence ID" value="XM_629239.1"/>
</dbReference>
<dbReference type="SMR" id="Q54C25"/>
<dbReference type="FunCoup" id="Q54C25">
    <property type="interactions" value="219"/>
</dbReference>
<dbReference type="STRING" id="44689.Q54C25"/>
<dbReference type="PaxDb" id="44689-DDB0233477"/>
<dbReference type="EnsemblProtists" id="EAL60809">
    <property type="protein sequence ID" value="EAL60809"/>
    <property type="gene ID" value="DDB_G0293220"/>
</dbReference>
<dbReference type="GeneID" id="8629123"/>
<dbReference type="KEGG" id="ddi:DDB_G0293220"/>
<dbReference type="dictyBase" id="DDB_G0293220">
    <property type="gene designation" value="gpn1"/>
</dbReference>
<dbReference type="VEuPathDB" id="AmoebaDB:DDB_G0293220"/>
<dbReference type="eggNOG" id="KOG1532">
    <property type="taxonomic scope" value="Eukaryota"/>
</dbReference>
<dbReference type="HOGENOM" id="CLU_037460_1_3_1"/>
<dbReference type="InParanoid" id="Q54C25"/>
<dbReference type="OMA" id="MIIVFNK"/>
<dbReference type="PhylomeDB" id="Q54C25"/>
<dbReference type="PRO" id="PR:Q54C25"/>
<dbReference type="Proteomes" id="UP000002195">
    <property type="component" value="Chromosome 6"/>
</dbReference>
<dbReference type="GO" id="GO:0005737">
    <property type="term" value="C:cytoplasm"/>
    <property type="evidence" value="ECO:0007669"/>
    <property type="project" value="UniProtKB-SubCell"/>
</dbReference>
<dbReference type="GO" id="GO:0005634">
    <property type="term" value="C:nucleus"/>
    <property type="evidence" value="ECO:0007669"/>
    <property type="project" value="UniProtKB-SubCell"/>
</dbReference>
<dbReference type="GO" id="GO:0016887">
    <property type="term" value="F:ATP hydrolysis activity"/>
    <property type="evidence" value="ECO:0007669"/>
    <property type="project" value="InterPro"/>
</dbReference>
<dbReference type="GO" id="GO:0005525">
    <property type="term" value="F:GTP binding"/>
    <property type="evidence" value="ECO:0007669"/>
    <property type="project" value="UniProtKB-KW"/>
</dbReference>
<dbReference type="GO" id="GO:0003924">
    <property type="term" value="F:GTPase activity"/>
    <property type="evidence" value="ECO:0000318"/>
    <property type="project" value="GO_Central"/>
</dbReference>
<dbReference type="CDD" id="cd17870">
    <property type="entry name" value="GPN1"/>
    <property type="match status" value="1"/>
</dbReference>
<dbReference type="FunFam" id="3.40.50.300:FF:000888">
    <property type="entry name" value="GPN-loop GTPase 1"/>
    <property type="match status" value="1"/>
</dbReference>
<dbReference type="Gene3D" id="3.40.50.300">
    <property type="entry name" value="P-loop containing nucleotide triphosphate hydrolases"/>
    <property type="match status" value="1"/>
</dbReference>
<dbReference type="InterPro" id="IPR003593">
    <property type="entry name" value="AAA+_ATPase"/>
</dbReference>
<dbReference type="InterPro" id="IPR004130">
    <property type="entry name" value="Gpn"/>
</dbReference>
<dbReference type="InterPro" id="IPR030230">
    <property type="entry name" value="Gpn1/Npa3/XAB1"/>
</dbReference>
<dbReference type="InterPro" id="IPR027417">
    <property type="entry name" value="P-loop_NTPase"/>
</dbReference>
<dbReference type="PANTHER" id="PTHR21231:SF8">
    <property type="entry name" value="GPN-LOOP GTPASE 1"/>
    <property type="match status" value="1"/>
</dbReference>
<dbReference type="PANTHER" id="PTHR21231">
    <property type="entry name" value="XPA-BINDING PROTEIN 1-RELATED"/>
    <property type="match status" value="1"/>
</dbReference>
<dbReference type="Pfam" id="PF03029">
    <property type="entry name" value="ATP_bind_1"/>
    <property type="match status" value="1"/>
</dbReference>
<dbReference type="PRINTS" id="PR00449">
    <property type="entry name" value="RASTRNSFRMNG"/>
</dbReference>
<dbReference type="SMART" id="SM00382">
    <property type="entry name" value="AAA"/>
    <property type="match status" value="1"/>
</dbReference>
<dbReference type="SUPFAM" id="SSF52540">
    <property type="entry name" value="P-loop containing nucleoside triphosphate hydrolases"/>
    <property type="match status" value="1"/>
</dbReference>
<proteinExistence type="inferred from homology"/>
<reference key="1">
    <citation type="journal article" date="2005" name="Nature">
        <title>The genome of the social amoeba Dictyostelium discoideum.</title>
        <authorList>
            <person name="Eichinger L."/>
            <person name="Pachebat J.A."/>
            <person name="Gloeckner G."/>
            <person name="Rajandream M.A."/>
            <person name="Sucgang R."/>
            <person name="Berriman M."/>
            <person name="Song J."/>
            <person name="Olsen R."/>
            <person name="Szafranski K."/>
            <person name="Xu Q."/>
            <person name="Tunggal B."/>
            <person name="Kummerfeld S."/>
            <person name="Madera M."/>
            <person name="Konfortov B.A."/>
            <person name="Rivero F."/>
            <person name="Bankier A.T."/>
            <person name="Lehmann R."/>
            <person name="Hamlin N."/>
            <person name="Davies R."/>
            <person name="Gaudet P."/>
            <person name="Fey P."/>
            <person name="Pilcher K."/>
            <person name="Chen G."/>
            <person name="Saunders D."/>
            <person name="Sodergren E.J."/>
            <person name="Davis P."/>
            <person name="Kerhornou A."/>
            <person name="Nie X."/>
            <person name="Hall N."/>
            <person name="Anjard C."/>
            <person name="Hemphill L."/>
            <person name="Bason N."/>
            <person name="Farbrother P."/>
            <person name="Desany B."/>
            <person name="Just E."/>
            <person name="Morio T."/>
            <person name="Rost R."/>
            <person name="Churcher C.M."/>
            <person name="Cooper J."/>
            <person name="Haydock S."/>
            <person name="van Driessche N."/>
            <person name="Cronin A."/>
            <person name="Goodhead I."/>
            <person name="Muzny D.M."/>
            <person name="Mourier T."/>
            <person name="Pain A."/>
            <person name="Lu M."/>
            <person name="Harper D."/>
            <person name="Lindsay R."/>
            <person name="Hauser H."/>
            <person name="James K.D."/>
            <person name="Quiles M."/>
            <person name="Madan Babu M."/>
            <person name="Saito T."/>
            <person name="Buchrieser C."/>
            <person name="Wardroper A."/>
            <person name="Felder M."/>
            <person name="Thangavelu M."/>
            <person name="Johnson D."/>
            <person name="Knights A."/>
            <person name="Loulseged H."/>
            <person name="Mungall K.L."/>
            <person name="Oliver K."/>
            <person name="Price C."/>
            <person name="Quail M.A."/>
            <person name="Urushihara H."/>
            <person name="Hernandez J."/>
            <person name="Rabbinowitsch E."/>
            <person name="Steffen D."/>
            <person name="Sanders M."/>
            <person name="Ma J."/>
            <person name="Kohara Y."/>
            <person name="Sharp S."/>
            <person name="Simmonds M.N."/>
            <person name="Spiegler S."/>
            <person name="Tivey A."/>
            <person name="Sugano S."/>
            <person name="White B."/>
            <person name="Walker D."/>
            <person name="Woodward J.R."/>
            <person name="Winckler T."/>
            <person name="Tanaka Y."/>
            <person name="Shaulsky G."/>
            <person name="Schleicher M."/>
            <person name="Weinstock G.M."/>
            <person name="Rosenthal A."/>
            <person name="Cox E.C."/>
            <person name="Chisholm R.L."/>
            <person name="Gibbs R.A."/>
            <person name="Loomis W.F."/>
            <person name="Platzer M."/>
            <person name="Kay R.R."/>
            <person name="Williams J.G."/>
            <person name="Dear P.H."/>
            <person name="Noegel A.A."/>
            <person name="Barrell B.G."/>
            <person name="Kuspa A."/>
        </authorList>
    </citation>
    <scope>NUCLEOTIDE SEQUENCE [LARGE SCALE GENOMIC DNA]</scope>
    <source>
        <strain>AX4</strain>
    </source>
</reference>
<name>GPN1_DICDI</name>
<protein>
    <recommendedName>
        <fullName evidence="1">GPN-loop GTPase 1</fullName>
        <ecNumber evidence="1">3.6.5.-</ecNumber>
    </recommendedName>
    <alternativeName>
        <fullName evidence="1">XPA-binding protein 1 homolog</fullName>
    </alternativeName>
</protein>
<sequence>MSETTATSTTTTKTTDKDNVNNNNNNENKEEKQPINIIVLGMAGSGKTTLLQRIRAHLYENKIPGYIINLDPAVSKLPYTPNIDIRDTVNYKEVMKQFNLGPNGGIVTSLNLFSTKFDKVLEIVEKRSSSLDYIILDTPGQIEVFTWSASGTIITELMASSFPTVLVYVVDTPRTVDPTTFMSNMLYACSIMYKSKLPMVVAFNKIDITNHRFAEEWMSDFDSFQDALTNDPTYMGNLTRSLSLVLEEFYSTLQSVGVSAVDGSGIDEFFEKIGLAAQDYHKYYKADLEKIKKQKSDKEQAEANKNWEKLKRDLEESKGAKVEYDFKKEKKRENQEKTKNIYDDEEDDYRDDRDMEDSGEYESYEDEQEEGDYENEEERLEDQRAYESLMSSIKKI</sequence>
<comment type="function">
    <text evidence="1">Small GTPase required for proper nuclear import of RNA polymerase II (RNAPII). May act at an RNAP assembly step prior to nuclear import.</text>
</comment>
<comment type="subunit">
    <text evidence="1">Heterodimer with gpn3. Binds to RNA polymerase II (RNAPII).</text>
</comment>
<comment type="subcellular location">
    <subcellularLocation>
        <location evidence="1">Cytoplasm</location>
    </subcellularLocation>
    <subcellularLocation>
        <location evidence="1">Nucleus</location>
    </subcellularLocation>
    <text evidence="1">Shuttles between the nucleus and the cytoplasm.</text>
</comment>
<comment type="similarity">
    <text evidence="5">Belongs to the GPN-loop GTPase family.</text>
</comment>
<feature type="chain" id="PRO_0000330935" description="GPN-loop GTPase 1">
    <location>
        <begin position="1"/>
        <end position="396"/>
    </location>
</feature>
<feature type="region of interest" description="Disordered" evidence="4">
    <location>
        <begin position="1"/>
        <end position="30"/>
    </location>
</feature>
<feature type="region of interest" description="Disordered" evidence="4">
    <location>
        <begin position="325"/>
        <end position="396"/>
    </location>
</feature>
<feature type="coiled-coil region" evidence="3">
    <location>
        <begin position="284"/>
        <end position="387"/>
    </location>
</feature>
<feature type="short sequence motif" description="Gly-Pro-Asn (GPN)-loop; involved in dimer interface" evidence="2">
    <location>
        <begin position="101"/>
        <end position="103"/>
    </location>
</feature>
<feature type="compositionally biased region" description="Low complexity" evidence="4">
    <location>
        <begin position="1"/>
        <end position="13"/>
    </location>
</feature>
<feature type="compositionally biased region" description="Basic and acidic residues" evidence="4">
    <location>
        <begin position="325"/>
        <end position="342"/>
    </location>
</feature>
<feature type="compositionally biased region" description="Acidic residues" evidence="4">
    <location>
        <begin position="343"/>
        <end position="380"/>
    </location>
</feature>
<feature type="binding site" evidence="2">
    <location>
        <begin position="44"/>
        <end position="49"/>
    </location>
    <ligand>
        <name>GTP</name>
        <dbReference type="ChEBI" id="CHEBI:37565"/>
    </ligand>
</feature>
<feature type="binding site" evidence="2">
    <location>
        <begin position="204"/>
        <end position="207"/>
    </location>
    <ligand>
        <name>GTP</name>
        <dbReference type="ChEBI" id="CHEBI:37565"/>
    </ligand>
</feature>
<feature type="site" description="Stabilizes the phosphate intermediate; shared with dimeric partner" evidence="2">
    <location>
        <position position="103"/>
    </location>
</feature>
<keyword id="KW-0175">Coiled coil</keyword>
<keyword id="KW-0963">Cytoplasm</keyword>
<keyword id="KW-0342">GTP-binding</keyword>
<keyword id="KW-0378">Hydrolase</keyword>
<keyword id="KW-0547">Nucleotide-binding</keyword>
<keyword id="KW-0539">Nucleus</keyword>
<keyword id="KW-1185">Reference proteome</keyword>
<gene>
    <name type="primary">gpn1</name>
    <name evidence="1" type="synonym">xab1</name>
    <name type="ORF">DDB_G0293220</name>
</gene>
<evidence type="ECO:0000250" key="1">
    <source>
        <dbReference type="UniProtKB" id="Q9HCN4"/>
    </source>
</evidence>
<evidence type="ECO:0000250" key="2">
    <source>
        <dbReference type="UniProtKB" id="Q9UYR9"/>
    </source>
</evidence>
<evidence type="ECO:0000255" key="3"/>
<evidence type="ECO:0000256" key="4">
    <source>
        <dbReference type="SAM" id="MobiDB-lite"/>
    </source>
</evidence>
<evidence type="ECO:0000305" key="5"/>
<accession>Q54C25</accession>